<reference key="1">
    <citation type="journal article" date="2011" name="Appl. Environ. Microbiol.">
        <title>Genomic potential of Marinobacter aquaeolei, a biogeochemical 'opportunitroph'.</title>
        <authorList>
            <person name="Singer E."/>
            <person name="Webb E.A."/>
            <person name="Nelson W.C."/>
            <person name="Heidelberg J.F."/>
            <person name="Ivanova N."/>
            <person name="Pati A."/>
            <person name="Edwards K.J."/>
        </authorList>
    </citation>
    <scope>NUCLEOTIDE SEQUENCE [LARGE SCALE GENOMIC DNA]</scope>
    <source>
        <strain>ATCC 700491 / DSM 11845 / VT8</strain>
    </source>
</reference>
<gene>
    <name evidence="1" type="primary">rlmH</name>
    <name type="ordered locus">Maqu_2414</name>
</gene>
<dbReference type="EC" id="2.1.1.177" evidence="1"/>
<dbReference type="EMBL" id="CP000514">
    <property type="protein sequence ID" value="ABM19489.1"/>
    <property type="molecule type" value="Genomic_DNA"/>
</dbReference>
<dbReference type="RefSeq" id="WP_011785873.1">
    <property type="nucleotide sequence ID" value="NC_008740.1"/>
</dbReference>
<dbReference type="SMR" id="A1U3C0"/>
<dbReference type="STRING" id="351348.Maqu_2414"/>
<dbReference type="KEGG" id="maq:Maqu_2414"/>
<dbReference type="eggNOG" id="COG1576">
    <property type="taxonomic scope" value="Bacteria"/>
</dbReference>
<dbReference type="HOGENOM" id="CLU_100552_1_0_6"/>
<dbReference type="OrthoDB" id="9806643at2"/>
<dbReference type="Proteomes" id="UP000000998">
    <property type="component" value="Chromosome"/>
</dbReference>
<dbReference type="GO" id="GO:0005737">
    <property type="term" value="C:cytoplasm"/>
    <property type="evidence" value="ECO:0007669"/>
    <property type="project" value="UniProtKB-SubCell"/>
</dbReference>
<dbReference type="GO" id="GO:0070038">
    <property type="term" value="F:rRNA (pseudouridine-N3-)-methyltransferase activity"/>
    <property type="evidence" value="ECO:0007669"/>
    <property type="project" value="UniProtKB-UniRule"/>
</dbReference>
<dbReference type="CDD" id="cd18081">
    <property type="entry name" value="RlmH-like"/>
    <property type="match status" value="1"/>
</dbReference>
<dbReference type="Gene3D" id="3.40.1280.10">
    <property type="match status" value="1"/>
</dbReference>
<dbReference type="HAMAP" id="MF_00658">
    <property type="entry name" value="23SrRNA_methyltr_H"/>
    <property type="match status" value="1"/>
</dbReference>
<dbReference type="InterPro" id="IPR029028">
    <property type="entry name" value="Alpha/beta_knot_MTases"/>
</dbReference>
<dbReference type="InterPro" id="IPR003742">
    <property type="entry name" value="RlmH-like"/>
</dbReference>
<dbReference type="InterPro" id="IPR029026">
    <property type="entry name" value="tRNA_m1G_MTases_N"/>
</dbReference>
<dbReference type="NCBIfam" id="NF000984">
    <property type="entry name" value="PRK00103.1-1"/>
    <property type="match status" value="1"/>
</dbReference>
<dbReference type="NCBIfam" id="NF000986">
    <property type="entry name" value="PRK00103.1-4"/>
    <property type="match status" value="1"/>
</dbReference>
<dbReference type="NCBIfam" id="TIGR00246">
    <property type="entry name" value="tRNA_RlmH_YbeA"/>
    <property type="match status" value="1"/>
</dbReference>
<dbReference type="PANTHER" id="PTHR33603">
    <property type="entry name" value="METHYLTRANSFERASE"/>
    <property type="match status" value="1"/>
</dbReference>
<dbReference type="PANTHER" id="PTHR33603:SF1">
    <property type="entry name" value="RIBOSOMAL RNA LARGE SUBUNIT METHYLTRANSFERASE H"/>
    <property type="match status" value="1"/>
</dbReference>
<dbReference type="Pfam" id="PF02590">
    <property type="entry name" value="SPOUT_MTase"/>
    <property type="match status" value="1"/>
</dbReference>
<dbReference type="PIRSF" id="PIRSF004505">
    <property type="entry name" value="MT_bac"/>
    <property type="match status" value="1"/>
</dbReference>
<dbReference type="SUPFAM" id="SSF75217">
    <property type="entry name" value="alpha/beta knot"/>
    <property type="match status" value="1"/>
</dbReference>
<protein>
    <recommendedName>
        <fullName evidence="1">Ribosomal RNA large subunit methyltransferase H</fullName>
        <ecNumber evidence="1">2.1.1.177</ecNumber>
    </recommendedName>
    <alternativeName>
        <fullName evidence="1">23S rRNA (pseudouridine1915-N3)-methyltransferase</fullName>
    </alternativeName>
    <alternativeName>
        <fullName evidence="1">23S rRNA m3Psi1915 methyltransferase</fullName>
    </alternativeName>
    <alternativeName>
        <fullName evidence="1">rRNA (pseudouridine-N3-)-methyltransferase RlmH</fullName>
    </alternativeName>
</protein>
<keyword id="KW-0963">Cytoplasm</keyword>
<keyword id="KW-0489">Methyltransferase</keyword>
<keyword id="KW-0698">rRNA processing</keyword>
<keyword id="KW-0949">S-adenosyl-L-methionine</keyword>
<keyword id="KW-0808">Transferase</keyword>
<evidence type="ECO:0000255" key="1">
    <source>
        <dbReference type="HAMAP-Rule" id="MF_00658"/>
    </source>
</evidence>
<feature type="chain" id="PRO_1000061803" description="Ribosomal RNA large subunit methyltransferase H">
    <location>
        <begin position="1"/>
        <end position="156"/>
    </location>
</feature>
<feature type="binding site" evidence="1">
    <location>
        <position position="73"/>
    </location>
    <ligand>
        <name>S-adenosyl-L-methionine</name>
        <dbReference type="ChEBI" id="CHEBI:59789"/>
    </ligand>
</feature>
<feature type="binding site" evidence="1">
    <location>
        <position position="104"/>
    </location>
    <ligand>
        <name>S-adenosyl-L-methionine</name>
        <dbReference type="ChEBI" id="CHEBI:59789"/>
    </ligand>
</feature>
<feature type="binding site" evidence="1">
    <location>
        <begin position="123"/>
        <end position="128"/>
    </location>
    <ligand>
        <name>S-adenosyl-L-methionine</name>
        <dbReference type="ChEBI" id="CHEBI:59789"/>
    </ligand>
</feature>
<proteinExistence type="inferred from homology"/>
<name>RLMH_MARN8</name>
<sequence length="156" mass="17720">MRLRLICVGQKMPDWVSAGYNDYARRMPPELPLELTEIPMAHRGKNPDISRLMQRESDAILSAAGTRDRVVALEVGGRPWSTEKLASQLENWQQDGRDVAFLVGGPDGLADACRQRADQQWSLSPLTLPHPLVRILLAEQLYRAWTITRNHPYHRA</sequence>
<accession>A1U3C0</accession>
<organism>
    <name type="scientific">Marinobacter nauticus (strain ATCC 700491 / DSM 11845 / VT8)</name>
    <name type="common">Marinobacter aquaeolei</name>
    <dbReference type="NCBI Taxonomy" id="351348"/>
    <lineage>
        <taxon>Bacteria</taxon>
        <taxon>Pseudomonadati</taxon>
        <taxon>Pseudomonadota</taxon>
        <taxon>Gammaproteobacteria</taxon>
        <taxon>Pseudomonadales</taxon>
        <taxon>Marinobacteraceae</taxon>
        <taxon>Marinobacter</taxon>
    </lineage>
</organism>
<comment type="function">
    <text evidence="1">Specifically methylates the pseudouridine at position 1915 (m3Psi1915) in 23S rRNA.</text>
</comment>
<comment type="catalytic activity">
    <reaction evidence="1">
        <text>pseudouridine(1915) in 23S rRNA + S-adenosyl-L-methionine = N(3)-methylpseudouridine(1915) in 23S rRNA + S-adenosyl-L-homocysteine + H(+)</text>
        <dbReference type="Rhea" id="RHEA:42752"/>
        <dbReference type="Rhea" id="RHEA-COMP:10221"/>
        <dbReference type="Rhea" id="RHEA-COMP:10222"/>
        <dbReference type="ChEBI" id="CHEBI:15378"/>
        <dbReference type="ChEBI" id="CHEBI:57856"/>
        <dbReference type="ChEBI" id="CHEBI:59789"/>
        <dbReference type="ChEBI" id="CHEBI:65314"/>
        <dbReference type="ChEBI" id="CHEBI:74486"/>
        <dbReference type="EC" id="2.1.1.177"/>
    </reaction>
</comment>
<comment type="subunit">
    <text evidence="1">Homodimer.</text>
</comment>
<comment type="subcellular location">
    <subcellularLocation>
        <location evidence="1">Cytoplasm</location>
    </subcellularLocation>
</comment>
<comment type="similarity">
    <text evidence="1">Belongs to the RNA methyltransferase RlmH family.</text>
</comment>